<accession>B0JZ85</accession>
<protein>
    <recommendedName>
        <fullName evidence="2">Zinc finger protein 346</fullName>
    </recommendedName>
    <alternativeName>
        <fullName evidence="2">Just another zinc finger protein</fullName>
        <shortName>Protein jaz</shortName>
    </alternativeName>
</protein>
<dbReference type="EMBL" id="BC159076">
    <property type="protein sequence ID" value="AAI59077.1"/>
    <property type="status" value="ALT_INIT"/>
    <property type="molecule type" value="mRNA"/>
</dbReference>
<dbReference type="RefSeq" id="XP_002936996.2">
    <property type="nucleotide sequence ID" value="XM_002936950.2"/>
</dbReference>
<dbReference type="SMR" id="B0JZ85"/>
<dbReference type="FunCoup" id="B0JZ85">
    <property type="interactions" value="2475"/>
</dbReference>
<dbReference type="STRING" id="8364.ENSXETP00000040929"/>
<dbReference type="GeneID" id="100135716"/>
<dbReference type="KEGG" id="xtr:100135716"/>
<dbReference type="AGR" id="Xenbase:XB-GENE-967544"/>
<dbReference type="CTD" id="23567"/>
<dbReference type="Xenbase" id="XB-GENE-967544">
    <property type="gene designation" value="znf346"/>
</dbReference>
<dbReference type="eggNOG" id="ENOG502RVNK">
    <property type="taxonomic scope" value="Eukaryota"/>
</dbReference>
<dbReference type="InParanoid" id="B0JZ85"/>
<dbReference type="OrthoDB" id="1925236at2759"/>
<dbReference type="Proteomes" id="UP000008143">
    <property type="component" value="Chromosome 3"/>
</dbReference>
<dbReference type="Bgee" id="ENSXETG00000007230">
    <property type="expression patterns" value="Expressed in egg cell and 16 other cell types or tissues"/>
</dbReference>
<dbReference type="GO" id="GO:0005737">
    <property type="term" value="C:cytoplasm"/>
    <property type="evidence" value="ECO:0007669"/>
    <property type="project" value="UniProtKB-SubCell"/>
</dbReference>
<dbReference type="GO" id="GO:0005634">
    <property type="term" value="C:nucleus"/>
    <property type="evidence" value="ECO:0000250"/>
    <property type="project" value="UniProtKB"/>
</dbReference>
<dbReference type="GO" id="GO:0003725">
    <property type="term" value="F:double-stranded RNA binding"/>
    <property type="evidence" value="ECO:0000250"/>
    <property type="project" value="UniProtKB"/>
</dbReference>
<dbReference type="GO" id="GO:0008270">
    <property type="term" value="F:zinc ion binding"/>
    <property type="evidence" value="ECO:0007669"/>
    <property type="project" value="UniProtKB-KW"/>
</dbReference>
<dbReference type="FunFam" id="3.30.160.60:FF:002387">
    <property type="entry name" value="Zinc finger protein 346"/>
    <property type="match status" value="1"/>
</dbReference>
<dbReference type="FunFam" id="3.30.160.60:FF:000700">
    <property type="entry name" value="zinc finger protein 346 isoform X1"/>
    <property type="match status" value="1"/>
</dbReference>
<dbReference type="Gene3D" id="3.30.160.60">
    <property type="entry name" value="Classic Zinc Finger"/>
    <property type="match status" value="4"/>
</dbReference>
<dbReference type="InterPro" id="IPR003604">
    <property type="entry name" value="Matrin/U1-like-C_Znf_C2H2"/>
</dbReference>
<dbReference type="InterPro" id="IPR051868">
    <property type="entry name" value="ZN346_ZMAT4"/>
</dbReference>
<dbReference type="InterPro" id="IPR036236">
    <property type="entry name" value="Znf_C2H2_sf"/>
</dbReference>
<dbReference type="InterPro" id="IPR013087">
    <property type="entry name" value="Znf_C2H2_type"/>
</dbReference>
<dbReference type="PANTHER" id="PTHR46144:SF5">
    <property type="entry name" value="ZINC FINGER PROTEIN 346"/>
    <property type="match status" value="1"/>
</dbReference>
<dbReference type="PANTHER" id="PTHR46144">
    <property type="entry name" value="ZINC FINGER PROTEIN 385B-LIKE"/>
    <property type="match status" value="1"/>
</dbReference>
<dbReference type="Pfam" id="PF12874">
    <property type="entry name" value="zf-met"/>
    <property type="match status" value="4"/>
</dbReference>
<dbReference type="SMART" id="SM00355">
    <property type="entry name" value="ZnF_C2H2"/>
    <property type="match status" value="4"/>
</dbReference>
<dbReference type="SMART" id="SM00451">
    <property type="entry name" value="ZnF_U1"/>
    <property type="match status" value="4"/>
</dbReference>
<dbReference type="SUPFAM" id="SSF57667">
    <property type="entry name" value="beta-beta-alpha zinc fingers"/>
    <property type="match status" value="4"/>
</dbReference>
<feature type="chain" id="PRO_0000348935" description="Zinc finger protein 346">
    <location>
        <begin position="1"/>
        <end position="354"/>
    </location>
</feature>
<feature type="zinc finger region" description="Matrin-type 1" evidence="3">
    <location>
        <begin position="34"/>
        <end position="64"/>
    </location>
</feature>
<feature type="zinc finger region" description="Matrin-type 2" evidence="3">
    <location>
        <begin position="95"/>
        <end position="125"/>
    </location>
</feature>
<feature type="zinc finger region" description="Matrin-type 3" evidence="3">
    <location>
        <begin position="165"/>
        <end position="195"/>
    </location>
</feature>
<feature type="zinc finger region" description="Matrin-type 4" evidence="3">
    <location>
        <begin position="232"/>
        <end position="262"/>
    </location>
</feature>
<feature type="region of interest" description="Disordered" evidence="4">
    <location>
        <begin position="263"/>
        <end position="343"/>
    </location>
</feature>
<feature type="compositionally biased region" description="Low complexity" evidence="4">
    <location>
        <begin position="270"/>
        <end position="289"/>
    </location>
</feature>
<feature type="compositionally biased region" description="Low complexity" evidence="4">
    <location>
        <begin position="310"/>
        <end position="323"/>
    </location>
</feature>
<feature type="compositionally biased region" description="Pro residues" evidence="4">
    <location>
        <begin position="324"/>
        <end position="333"/>
    </location>
</feature>
<feature type="binding site" evidence="1">
    <location>
        <position position="36"/>
    </location>
    <ligand>
        <name>Zn(2+)</name>
        <dbReference type="ChEBI" id="CHEBI:29105"/>
        <label>1</label>
    </ligand>
</feature>
<feature type="binding site" evidence="1">
    <location>
        <position position="39"/>
    </location>
    <ligand>
        <name>Zn(2+)</name>
        <dbReference type="ChEBI" id="CHEBI:29105"/>
        <label>1</label>
    </ligand>
</feature>
<feature type="binding site" evidence="1">
    <location>
        <position position="52"/>
    </location>
    <ligand>
        <name>Zn(2+)</name>
        <dbReference type="ChEBI" id="CHEBI:29105"/>
        <label>1</label>
    </ligand>
</feature>
<feature type="binding site" evidence="1">
    <location>
        <position position="58"/>
    </location>
    <ligand>
        <name>Zn(2+)</name>
        <dbReference type="ChEBI" id="CHEBI:29105"/>
        <label>1</label>
    </ligand>
</feature>
<feature type="binding site" evidence="1">
    <location>
        <position position="97"/>
    </location>
    <ligand>
        <name>Zn(2+)</name>
        <dbReference type="ChEBI" id="CHEBI:29105"/>
        <label>2</label>
    </ligand>
</feature>
<feature type="binding site" evidence="1">
    <location>
        <position position="100"/>
    </location>
    <ligand>
        <name>Zn(2+)</name>
        <dbReference type="ChEBI" id="CHEBI:29105"/>
        <label>2</label>
    </ligand>
</feature>
<feature type="binding site" evidence="1">
    <location>
        <position position="113"/>
    </location>
    <ligand>
        <name>Zn(2+)</name>
        <dbReference type="ChEBI" id="CHEBI:29105"/>
        <label>2</label>
    </ligand>
</feature>
<feature type="binding site" evidence="1">
    <location>
        <position position="119"/>
    </location>
    <ligand>
        <name>Zn(2+)</name>
        <dbReference type="ChEBI" id="CHEBI:29105"/>
        <label>2</label>
    </ligand>
</feature>
<name>ZN346_XENTR</name>
<proteinExistence type="evidence at transcript level"/>
<organism>
    <name type="scientific">Xenopus tropicalis</name>
    <name type="common">Western clawed frog</name>
    <name type="synonym">Silurana tropicalis</name>
    <dbReference type="NCBI Taxonomy" id="8364"/>
    <lineage>
        <taxon>Eukaryota</taxon>
        <taxon>Metazoa</taxon>
        <taxon>Chordata</taxon>
        <taxon>Craniata</taxon>
        <taxon>Vertebrata</taxon>
        <taxon>Euteleostomi</taxon>
        <taxon>Amphibia</taxon>
        <taxon>Batrachia</taxon>
        <taxon>Anura</taxon>
        <taxon>Pipoidea</taxon>
        <taxon>Pipidae</taxon>
        <taxon>Xenopodinae</taxon>
        <taxon>Xenopus</taxon>
        <taxon>Silurana</taxon>
    </lineage>
</organism>
<keyword id="KW-0963">Cytoplasm</keyword>
<keyword id="KW-0479">Metal-binding</keyword>
<keyword id="KW-0539">Nucleus</keyword>
<keyword id="KW-1185">Reference proteome</keyword>
<keyword id="KW-0677">Repeat</keyword>
<keyword id="KW-0694">RNA-binding</keyword>
<keyword id="KW-0862">Zinc</keyword>
<keyword id="KW-0863">Zinc-finger</keyword>
<comment type="function">
    <text evidence="1">Binds preferentially to dsRNA, but also to RNA-DNA hybrids.</text>
</comment>
<comment type="subcellular location">
    <subcellularLocation>
        <location evidence="1">Nucleus</location>
    </subcellularLocation>
    <subcellularLocation>
        <location evidence="1">Cytoplasm</location>
    </subcellularLocation>
    <text evidence="1">Primarily nuclear.</text>
</comment>
<comment type="domain">
    <text evidence="2">The zinc-finger domains are required for binding to dsRNA, and also for nuclear localization.</text>
</comment>
<comment type="sequence caution" evidence="5">
    <conflict type="erroneous initiation">
        <sequence resource="EMBL-CDS" id="AAI59077"/>
    </conflict>
</comment>
<evidence type="ECO:0000250" key="1">
    <source>
        <dbReference type="UniProtKB" id="Q8AVN9"/>
    </source>
</evidence>
<evidence type="ECO:0000250" key="2">
    <source>
        <dbReference type="UniProtKB" id="Q9R0B7"/>
    </source>
</evidence>
<evidence type="ECO:0000255" key="3"/>
<evidence type="ECO:0000256" key="4">
    <source>
        <dbReference type="SAM" id="MobiDB-lite"/>
    </source>
</evidence>
<evidence type="ECO:0000305" key="5"/>
<evidence type="ECO:0000312" key="6">
    <source>
        <dbReference type="EMBL" id="AAI59077.1"/>
    </source>
</evidence>
<reference evidence="6" key="1">
    <citation type="submission" date="2008-02" db="EMBL/GenBank/DDBJ databases">
        <authorList>
            <consortium name="NIH - Xenopus Gene Collection (XGC) project"/>
        </authorList>
    </citation>
    <scope>NUCLEOTIDE SEQUENCE [LARGE SCALE MRNA]</scope>
    <source>
        <tissue evidence="6">Embryo</tissue>
    </source>
</reference>
<sequence length="354" mass="37823">MADEFGDGDTVELPVGKEAVDALIRENSHIFSDTQCKVCSAVLISESQKLAHYQSRKHANKVRRYMSIHQGEEFVSAKKFKAAPAESSDGDDRSKCCPICNMTFSSPVVAESHYSGKTHIKNLRLREQGGVTEGMLHQAKKLVVTRTPTIATKIDNRMDQSDPTKFCKLCHATFNNPLMAEQHYAGKKHKKQETKTQLMTIYTSSGHTPAQAPIAINVNSPLPGSGSAGKGFSCDTCNIVLNSIEQYQAHVSGAKHKNQLMSMTPLSKEGPPAAGGPSALAGPPSTGGALSSGGPSARGFSASGGPTPKGPSSFGGLPPMGGLMPPPYPPPHSQPYVREDMMGPDGYTYFNKDF</sequence>
<gene>
    <name evidence="2" type="primary">znf346</name>
    <name evidence="1" type="synonym">jaz</name>
</gene>